<keyword id="KW-1064">Adaptive immunity</keyword>
<keyword id="KW-1003">Cell membrane</keyword>
<keyword id="KW-1015">Disulfide bond</keyword>
<keyword id="KW-0325">Glycoprotein</keyword>
<keyword id="KW-0391">Immunity</keyword>
<keyword id="KW-0393">Immunoglobulin domain</keyword>
<keyword id="KW-0399">Innate immunity</keyword>
<keyword id="KW-0472">Membrane</keyword>
<keyword id="KW-0675">Receptor</keyword>
<keyword id="KW-1185">Reference proteome</keyword>
<keyword id="KW-0732">Signal</keyword>
<keyword id="KW-0812">Transmembrane</keyword>
<keyword id="KW-1133">Transmembrane helix</keyword>
<organism>
    <name type="scientific">Pongo abelii</name>
    <name type="common">Sumatran orangutan</name>
    <name type="synonym">Pongo pygmaeus abelii</name>
    <dbReference type="NCBI Taxonomy" id="9601"/>
    <lineage>
        <taxon>Eukaryota</taxon>
        <taxon>Metazoa</taxon>
        <taxon>Chordata</taxon>
        <taxon>Craniata</taxon>
        <taxon>Vertebrata</taxon>
        <taxon>Euteleostomi</taxon>
        <taxon>Mammalia</taxon>
        <taxon>Eutheria</taxon>
        <taxon>Euarchontoglires</taxon>
        <taxon>Primates</taxon>
        <taxon>Haplorrhini</taxon>
        <taxon>Catarrhini</taxon>
        <taxon>Hominidae</taxon>
        <taxon>Pongo</taxon>
    </lineage>
</organism>
<evidence type="ECO:0000250" key="1">
    <source>
        <dbReference type="UniProtKB" id="Q9NP99"/>
    </source>
</evidence>
<evidence type="ECO:0000255" key="2"/>
<evidence type="ECO:0000256" key="3">
    <source>
        <dbReference type="SAM" id="MobiDB-lite"/>
    </source>
</evidence>
<accession>Q5RDA5</accession>
<feature type="signal peptide" evidence="2">
    <location>
        <begin position="1"/>
        <end position="20"/>
    </location>
</feature>
<feature type="chain" id="PRO_0000042799" description="Triggering receptor expressed on myeloid cells 1">
    <location>
        <begin position="21"/>
        <end position="231"/>
    </location>
</feature>
<feature type="topological domain" description="Extracellular" evidence="2">
    <location>
        <begin position="21"/>
        <end position="202"/>
    </location>
</feature>
<feature type="transmembrane region" description="Helical" evidence="2">
    <location>
        <begin position="203"/>
        <end position="223"/>
    </location>
</feature>
<feature type="topological domain" description="Cytoplasmic" evidence="2">
    <location>
        <begin position="224"/>
        <end position="231"/>
    </location>
</feature>
<feature type="domain" description="Ig-like V-type">
    <location>
        <begin position="26"/>
        <end position="131"/>
    </location>
</feature>
<feature type="region of interest" description="Disordered" evidence="3">
    <location>
        <begin position="134"/>
        <end position="182"/>
    </location>
</feature>
<feature type="compositionally biased region" description="Polar residues" evidence="3">
    <location>
        <begin position="134"/>
        <end position="157"/>
    </location>
</feature>
<feature type="compositionally biased region" description="Polar residues" evidence="3">
    <location>
        <begin position="164"/>
        <end position="182"/>
    </location>
</feature>
<feature type="glycosylation site" description="N-linked (GlcNAc...) asparagine" evidence="2">
    <location>
        <position position="188"/>
    </location>
</feature>
<feature type="glycosylation site" description="N-linked (GlcNAc...) asparagine" evidence="2">
    <location>
        <position position="191"/>
    </location>
</feature>
<feature type="disulfide bond" evidence="1">
    <location>
        <begin position="41"/>
        <end position="110"/>
    </location>
</feature>
<protein>
    <recommendedName>
        <fullName>Triggering receptor expressed on myeloid cells 1</fullName>
        <shortName>TREM-1</shortName>
    </recommendedName>
    <cdAntigenName>CD354</cdAntigenName>
</protein>
<comment type="function">
    <text evidence="1">Cell surface receptor that plays important roles in innate and adaptive immunity by amplifying inflammatory responses. Upon activation by various ligands such as PGLYRP1, HMGB1 or HSP70, multimerizes and forms a complex with transmembrane adapter TYROBP/DAP12. In turn, initiates a SYK-mediated cascade of tyrosine phosphorylation, activating multiple downstream mediators such as BTK, MAPK1, MAPK3 or phospholipase C-gamma. This cascade promotes the neutrophil- and macrophage-mediated release of pro-inflammatory cytokines and/or chemokines, as well as their migration and thereby amplifies inflammatory responses that are triggered by bacterial and fungal infections. By also promoting the amplification of inflammatory signals that are initially triggered by Toll-like receptor (TLR) and NOD-like receptor engagement, plays a major role in the pathophysiology of acute and chronic inflammatory diseases of different etiologies including septic shock and atherosclerosis.</text>
</comment>
<comment type="subunit">
    <text evidence="1">Monomer. Homomultimer; when activated. Interacts with TYROBP/DAP12. Interacts with TLR4.</text>
</comment>
<comment type="subcellular location">
    <subcellularLocation>
        <location evidence="1">Cell membrane</location>
        <topology evidence="1">Single-pass type I membrane protein</topology>
    </subcellularLocation>
    <text evidence="1">Recruited to lipid rafts when activated.</text>
</comment>
<dbReference type="EMBL" id="CR858010">
    <property type="protein sequence ID" value="CAH90252.1"/>
    <property type="molecule type" value="mRNA"/>
</dbReference>
<dbReference type="RefSeq" id="NP_001127259.1">
    <property type="nucleotide sequence ID" value="NM_001133787.1"/>
</dbReference>
<dbReference type="RefSeq" id="XP_009240116.1">
    <property type="nucleotide sequence ID" value="XM_009241841.1"/>
</dbReference>
<dbReference type="SMR" id="Q5RDA5"/>
<dbReference type="FunCoup" id="Q5RDA5">
    <property type="interactions" value="225"/>
</dbReference>
<dbReference type="STRING" id="9601.ENSPPYP00000018559"/>
<dbReference type="GlyCosmos" id="Q5RDA5">
    <property type="glycosylation" value="2 sites, No reported glycans"/>
</dbReference>
<dbReference type="Ensembl" id="ENSPPYT00000042526.1">
    <property type="protein sequence ID" value="ENSPPYP00000043121.1"/>
    <property type="gene ID" value="ENSPPYG00000033253.1"/>
</dbReference>
<dbReference type="GeneID" id="100174314"/>
<dbReference type="KEGG" id="pon:100174314"/>
<dbReference type="CTD" id="54210"/>
<dbReference type="eggNOG" id="ENOG502TE0T">
    <property type="taxonomic scope" value="Eukaryota"/>
</dbReference>
<dbReference type="GeneTree" id="ENSGT00470000042299"/>
<dbReference type="InParanoid" id="Q5RDA5"/>
<dbReference type="OMA" id="MTDIIRV"/>
<dbReference type="OrthoDB" id="8959642at2759"/>
<dbReference type="TreeFam" id="TF339293"/>
<dbReference type="Proteomes" id="UP000001595">
    <property type="component" value="Chromosome 6"/>
</dbReference>
<dbReference type="GO" id="GO:0005886">
    <property type="term" value="C:plasma membrane"/>
    <property type="evidence" value="ECO:0007669"/>
    <property type="project" value="UniProtKB-SubCell"/>
</dbReference>
<dbReference type="GO" id="GO:0002250">
    <property type="term" value="P:adaptive immune response"/>
    <property type="evidence" value="ECO:0007669"/>
    <property type="project" value="UniProtKB-KW"/>
</dbReference>
<dbReference type="GO" id="GO:0045087">
    <property type="term" value="P:innate immune response"/>
    <property type="evidence" value="ECO:0007669"/>
    <property type="project" value="UniProtKB-KW"/>
</dbReference>
<dbReference type="GO" id="GO:0030593">
    <property type="term" value="P:neutrophil chemotaxis"/>
    <property type="evidence" value="ECO:0007669"/>
    <property type="project" value="TreeGrafter"/>
</dbReference>
<dbReference type="GO" id="GO:0070945">
    <property type="term" value="P:neutrophil-mediated killing of gram-negative bacterium"/>
    <property type="evidence" value="ECO:0007669"/>
    <property type="project" value="TreeGrafter"/>
</dbReference>
<dbReference type="CDD" id="cd05716">
    <property type="entry name" value="IgV_pIgR_like"/>
    <property type="match status" value="1"/>
</dbReference>
<dbReference type="FunFam" id="2.60.40.10:FF:002053">
    <property type="entry name" value="Triggering receptor expressed on myeloid cells 1"/>
    <property type="match status" value="1"/>
</dbReference>
<dbReference type="Gene3D" id="2.60.40.10">
    <property type="entry name" value="Immunoglobulins"/>
    <property type="match status" value="1"/>
</dbReference>
<dbReference type="InterPro" id="IPR036179">
    <property type="entry name" value="Ig-like_dom_sf"/>
</dbReference>
<dbReference type="InterPro" id="IPR013783">
    <property type="entry name" value="Ig-like_fold"/>
</dbReference>
<dbReference type="InterPro" id="IPR003599">
    <property type="entry name" value="Ig_sub"/>
</dbReference>
<dbReference type="InterPro" id="IPR013106">
    <property type="entry name" value="Ig_V-set"/>
</dbReference>
<dbReference type="PANTHER" id="PTHR19357">
    <property type="entry name" value="TRIGGERING RECEPTOR EXPRESSED ON MYELOID CELLS 1"/>
    <property type="match status" value="1"/>
</dbReference>
<dbReference type="PANTHER" id="PTHR19357:SF0">
    <property type="entry name" value="TRIGGERING RECEPTOR EXPRESSED ON MYELOID CELLS 1"/>
    <property type="match status" value="1"/>
</dbReference>
<dbReference type="Pfam" id="PF07686">
    <property type="entry name" value="V-set"/>
    <property type="match status" value="1"/>
</dbReference>
<dbReference type="SMART" id="SM00409">
    <property type="entry name" value="IG"/>
    <property type="match status" value="1"/>
</dbReference>
<dbReference type="SUPFAM" id="SSF48726">
    <property type="entry name" value="Immunoglobulin"/>
    <property type="match status" value="1"/>
</dbReference>
<sequence>MRKTRLWGLLWMFFVSELLAATKLTEEKYELKEGQTLDVKCDYMLEKFASSRKAWQIIRDGEMPQTLACTERPSHPVQVGRIILEDYHDHGLLHVRMTNLQVEDSGLYQCVIYQPPKEPHVLFDRIRLVVTKGSSGTPGSSENSTPNVYKTPPTTTKALRPLYTSPTTVTQAPPKSTADVSTPDSEINLTNVTDIIRVPVFNIAILVAGGFLSKSLVFSVLFAVTLRSFVP</sequence>
<proteinExistence type="evidence at transcript level"/>
<name>TREM1_PONAB</name>
<gene>
    <name type="primary">TREM1</name>
</gene>
<reference key="1">
    <citation type="submission" date="2004-11" db="EMBL/GenBank/DDBJ databases">
        <authorList>
            <consortium name="The German cDNA consortium"/>
        </authorList>
    </citation>
    <scope>NUCLEOTIDE SEQUENCE [LARGE SCALE MRNA]</scope>
    <source>
        <tissue>Heart</tissue>
    </source>
</reference>